<gene>
    <name type="primary">vraS</name>
    <name type="ordered locus">SAV1885</name>
</gene>
<sequence length="347" mass="40045">MNHYNRTIGSMLILVYSMLAAFLFIDKVFVNIIYFQGMFYTQIFGIPVFLFLNLIIILLCIIVGSVLAYKINQQNDWIKTQIERSMEGETVGINDQNIEIYSETLDLYHTLVPLNQELHKLRLKTQNLTNENYNINDVKVKKIIEDERQRLARELHDSVSQQLFAASMMLSAIKETKLEPPLDQQIPILEKMVQDSQLEMRALLLHLRPLGLKDKSLGEGIKDLVIDLQKKVPMKVVHEIQDFKVPKGIEDHLFRITQEAISNTLRHSNGTKVTVELFNKDDYLLLRIQDNGKGFNVDEKLEQSYGLKNMRERALEIGATFHIVSLPDSGTRIEVKAPLNKEDSYDD</sequence>
<reference key="1">
    <citation type="journal article" date="2001" name="Lancet">
        <title>Whole genome sequencing of meticillin-resistant Staphylococcus aureus.</title>
        <authorList>
            <person name="Kuroda M."/>
            <person name="Ohta T."/>
            <person name="Uchiyama I."/>
            <person name="Baba T."/>
            <person name="Yuzawa H."/>
            <person name="Kobayashi I."/>
            <person name="Cui L."/>
            <person name="Oguchi A."/>
            <person name="Aoki K."/>
            <person name="Nagai Y."/>
            <person name="Lian J.-Q."/>
            <person name="Ito T."/>
            <person name="Kanamori M."/>
            <person name="Matsumaru H."/>
            <person name="Maruyama A."/>
            <person name="Murakami H."/>
            <person name="Hosoyama A."/>
            <person name="Mizutani-Ui Y."/>
            <person name="Takahashi N.K."/>
            <person name="Sawano T."/>
            <person name="Inoue R."/>
            <person name="Kaito C."/>
            <person name="Sekimizu K."/>
            <person name="Hirakawa H."/>
            <person name="Kuhara S."/>
            <person name="Goto S."/>
            <person name="Yabuzaki J."/>
            <person name="Kanehisa M."/>
            <person name="Yamashita A."/>
            <person name="Oshima K."/>
            <person name="Furuya K."/>
            <person name="Yoshino C."/>
            <person name="Shiba T."/>
            <person name="Hattori M."/>
            <person name="Ogasawara N."/>
            <person name="Hayashi H."/>
            <person name="Hiramatsu K."/>
        </authorList>
    </citation>
    <scope>NUCLEOTIDE SEQUENCE [LARGE SCALE GENOMIC DNA]</scope>
    <source>
        <strain>Mu50 / ATCC 700699</strain>
    </source>
</reference>
<reference key="2">
    <citation type="journal article" date="2000" name="Biochem. Biophys. Res. Commun.">
        <title>Identification of the up- and down-regulated genes in vancomycin-resistant Staphylococcus aureus strains Mu3 and Mu50 by cDNA differential hybridization method.</title>
        <authorList>
            <person name="Kuroda M."/>
            <person name="Kuwahara-Arai K."/>
            <person name="Hiramatsu K."/>
        </authorList>
    </citation>
    <scope>FUNCTION</scope>
</reference>
<accession>Q7A2Q0</accession>
<comment type="function">
    <text evidence="2">Member of the two-component regulatory system PprA/PprB involved in biofilm formation by controlling the expression of many related genes including type IVb pili major subunit flp pilin, adhesin bapA or cupE fimbriae. Also modulates quorum-sensing signal production acting on both negative and positive modulators. Functions as a heme sensor histidine kinase which is autophosphorylated at a histidine residue and transfers its phosphate group to PprB.</text>
</comment>
<comment type="catalytic activity">
    <reaction evidence="1">
        <text>ATP + protein L-histidine = ADP + protein N-phospho-L-histidine.</text>
        <dbReference type="EC" id="2.7.13.3"/>
    </reaction>
</comment>
<comment type="subcellular location">
    <subcellularLocation>
        <location evidence="4">Cell membrane</location>
        <topology evidence="4">Multi-pass membrane protein</topology>
    </subcellularLocation>
</comment>
<comment type="PTM">
    <text evidence="1">Autophosphorylated on His-156.</text>
</comment>
<name>VRAS_STAAM</name>
<organism>
    <name type="scientific">Staphylococcus aureus (strain Mu50 / ATCC 700699)</name>
    <dbReference type="NCBI Taxonomy" id="158878"/>
    <lineage>
        <taxon>Bacteria</taxon>
        <taxon>Bacillati</taxon>
        <taxon>Bacillota</taxon>
        <taxon>Bacilli</taxon>
        <taxon>Bacillales</taxon>
        <taxon>Staphylococcaceae</taxon>
        <taxon>Staphylococcus</taxon>
    </lineage>
</organism>
<protein>
    <recommendedName>
        <fullName>Sensor protein VraS</fullName>
        <ecNumber evidence="1">2.7.13.3</ecNumber>
    </recommendedName>
</protein>
<proteinExistence type="evidence at protein level"/>
<keyword id="KW-0002">3D-structure</keyword>
<keyword id="KW-0067">ATP-binding</keyword>
<keyword id="KW-1003">Cell membrane</keyword>
<keyword id="KW-0418">Kinase</keyword>
<keyword id="KW-0472">Membrane</keyword>
<keyword id="KW-0547">Nucleotide-binding</keyword>
<keyword id="KW-0597">Phosphoprotein</keyword>
<keyword id="KW-0808">Transferase</keyword>
<keyword id="KW-0812">Transmembrane</keyword>
<keyword id="KW-1133">Transmembrane helix</keyword>
<keyword id="KW-0902">Two-component regulatory system</keyword>
<evidence type="ECO:0000250" key="1">
    <source>
        <dbReference type="UniProtKB" id="Q99SZ7"/>
    </source>
</evidence>
<evidence type="ECO:0000250" key="2">
    <source>
        <dbReference type="UniProtKB" id="Q9HWA7"/>
    </source>
</evidence>
<evidence type="ECO:0000255" key="3"/>
<evidence type="ECO:0000305" key="4"/>
<evidence type="ECO:0007829" key="5">
    <source>
        <dbReference type="PDB" id="4GT8"/>
    </source>
</evidence>
<feature type="chain" id="PRO_0000074900" description="Sensor protein VraS">
    <location>
        <begin position="1"/>
        <end position="347"/>
    </location>
</feature>
<feature type="transmembrane region" description="Helical" evidence="3">
    <location>
        <begin position="13"/>
        <end position="33"/>
    </location>
</feature>
<feature type="transmembrane region" description="Helical" evidence="3">
    <location>
        <begin position="43"/>
        <end position="63"/>
    </location>
</feature>
<feature type="domain" description="Histidine kinase">
    <location>
        <begin position="150"/>
        <end position="341"/>
    </location>
</feature>
<feature type="modified residue" description="Phosphohistidine" evidence="1">
    <location>
        <position position="156"/>
    </location>
</feature>
<feature type="helix" evidence="5">
    <location>
        <begin position="217"/>
        <end position="229"/>
    </location>
</feature>
<feature type="strand" evidence="5">
    <location>
        <begin position="233"/>
        <end position="240"/>
    </location>
</feature>
<feature type="helix" evidence="5">
    <location>
        <begin position="247"/>
        <end position="267"/>
    </location>
</feature>
<feature type="strand" evidence="5">
    <location>
        <begin position="271"/>
        <end position="279"/>
    </location>
</feature>
<feature type="strand" evidence="5">
    <location>
        <begin position="281"/>
        <end position="290"/>
    </location>
</feature>
<feature type="helix" evidence="5">
    <location>
        <begin position="297"/>
        <end position="300"/>
    </location>
</feature>
<feature type="helix" evidence="5">
    <location>
        <begin position="301"/>
        <end position="303"/>
    </location>
</feature>
<feature type="helix" evidence="5">
    <location>
        <begin position="305"/>
        <end position="316"/>
    </location>
</feature>
<feature type="strand" evidence="5">
    <location>
        <begin position="320"/>
        <end position="326"/>
    </location>
</feature>
<feature type="turn" evidence="5">
    <location>
        <begin position="327"/>
        <end position="329"/>
    </location>
</feature>
<feature type="strand" evidence="5">
    <location>
        <begin position="330"/>
        <end position="338"/>
    </location>
</feature>
<dbReference type="EC" id="2.7.13.3" evidence="1"/>
<dbReference type="EMBL" id="BA000017">
    <property type="protein sequence ID" value="BAB58047.1"/>
    <property type="molecule type" value="Genomic_DNA"/>
</dbReference>
<dbReference type="RefSeq" id="WP_001017146.1">
    <property type="nucleotide sequence ID" value="NC_002758.2"/>
</dbReference>
<dbReference type="PDB" id="4GT8">
    <property type="method" value="X-ray"/>
    <property type="resolution" value="1.51 A"/>
    <property type="chains" value="A=212-347"/>
</dbReference>
<dbReference type="PDBsum" id="4GT8"/>
<dbReference type="SMR" id="Q7A2Q0"/>
<dbReference type="KEGG" id="sav:SAV1885"/>
<dbReference type="HOGENOM" id="CLU_000445_20_12_9"/>
<dbReference type="PhylomeDB" id="Q7A2Q0"/>
<dbReference type="EvolutionaryTrace" id="Q7A2Q0"/>
<dbReference type="Proteomes" id="UP000002481">
    <property type="component" value="Chromosome"/>
</dbReference>
<dbReference type="GO" id="GO:0005886">
    <property type="term" value="C:plasma membrane"/>
    <property type="evidence" value="ECO:0007669"/>
    <property type="project" value="UniProtKB-SubCell"/>
</dbReference>
<dbReference type="GO" id="GO:0005524">
    <property type="term" value="F:ATP binding"/>
    <property type="evidence" value="ECO:0007669"/>
    <property type="project" value="UniProtKB-KW"/>
</dbReference>
<dbReference type="GO" id="GO:0000155">
    <property type="term" value="F:phosphorelay sensor kinase activity"/>
    <property type="evidence" value="ECO:0007669"/>
    <property type="project" value="InterPro"/>
</dbReference>
<dbReference type="GO" id="GO:0046983">
    <property type="term" value="F:protein dimerization activity"/>
    <property type="evidence" value="ECO:0007669"/>
    <property type="project" value="InterPro"/>
</dbReference>
<dbReference type="CDD" id="cd16917">
    <property type="entry name" value="HATPase_UhpB-NarQ-NarX-like"/>
    <property type="match status" value="1"/>
</dbReference>
<dbReference type="Gene3D" id="1.20.5.1930">
    <property type="match status" value="1"/>
</dbReference>
<dbReference type="Gene3D" id="3.30.565.10">
    <property type="entry name" value="Histidine kinase-like ATPase, C-terminal domain"/>
    <property type="match status" value="1"/>
</dbReference>
<dbReference type="InterPro" id="IPR036890">
    <property type="entry name" value="HATPase_C_sf"/>
</dbReference>
<dbReference type="InterPro" id="IPR017202">
    <property type="entry name" value="LiaS/VraS"/>
</dbReference>
<dbReference type="InterPro" id="IPR050482">
    <property type="entry name" value="Sensor_HK_TwoCompSys"/>
</dbReference>
<dbReference type="InterPro" id="IPR011712">
    <property type="entry name" value="Sig_transdc_His_kin_sub3_dim/P"/>
</dbReference>
<dbReference type="PANTHER" id="PTHR24421">
    <property type="entry name" value="NITRATE/NITRITE SENSOR PROTEIN NARX-RELATED"/>
    <property type="match status" value="1"/>
</dbReference>
<dbReference type="PANTHER" id="PTHR24421:SF37">
    <property type="entry name" value="SENSOR HISTIDINE KINASE NARS"/>
    <property type="match status" value="1"/>
</dbReference>
<dbReference type="Pfam" id="PF02518">
    <property type="entry name" value="HATPase_c"/>
    <property type="match status" value="1"/>
</dbReference>
<dbReference type="Pfam" id="PF07730">
    <property type="entry name" value="HisKA_3"/>
    <property type="match status" value="1"/>
</dbReference>
<dbReference type="PIRSF" id="PIRSF037431">
    <property type="entry name" value="STHK_LiaS"/>
    <property type="match status" value="1"/>
</dbReference>
<dbReference type="SMART" id="SM00387">
    <property type="entry name" value="HATPase_c"/>
    <property type="match status" value="1"/>
</dbReference>
<dbReference type="SUPFAM" id="SSF55874">
    <property type="entry name" value="ATPase domain of HSP90 chaperone/DNA topoisomerase II/histidine kinase"/>
    <property type="match status" value="1"/>
</dbReference>